<evidence type="ECO:0000255" key="1">
    <source>
        <dbReference type="HAMAP-Rule" id="MF_01342"/>
    </source>
</evidence>
<evidence type="ECO:0000305" key="2"/>
<proteinExistence type="inferred from homology"/>
<organism>
    <name type="scientific">Bacillus thuringiensis subsp. konkukian (strain 97-27)</name>
    <dbReference type="NCBI Taxonomy" id="281309"/>
    <lineage>
        <taxon>Bacteria</taxon>
        <taxon>Bacillati</taxon>
        <taxon>Bacillota</taxon>
        <taxon>Bacilli</taxon>
        <taxon>Bacillales</taxon>
        <taxon>Bacillaceae</taxon>
        <taxon>Bacillus</taxon>
        <taxon>Bacillus cereus group</taxon>
    </lineage>
</organism>
<dbReference type="EMBL" id="AE017355">
    <property type="protein sequence ID" value="AAT58921.1"/>
    <property type="molecule type" value="Genomic_DNA"/>
</dbReference>
<dbReference type="RefSeq" id="WP_000928969.1">
    <property type="nucleotide sequence ID" value="NC_005957.1"/>
</dbReference>
<dbReference type="RefSeq" id="YP_034469.1">
    <property type="nucleotide sequence ID" value="NC_005957.1"/>
</dbReference>
<dbReference type="SMR" id="Q6HPQ1"/>
<dbReference type="GeneID" id="93010936"/>
<dbReference type="KEGG" id="btk:BT9727_0113"/>
<dbReference type="PATRIC" id="fig|281309.8.peg.114"/>
<dbReference type="HOGENOM" id="CLU_078858_2_1_9"/>
<dbReference type="PRO" id="PR:Q6HPQ1"/>
<dbReference type="Proteomes" id="UP000001301">
    <property type="component" value="Chromosome"/>
</dbReference>
<dbReference type="GO" id="GO:0022625">
    <property type="term" value="C:cytosolic large ribosomal subunit"/>
    <property type="evidence" value="ECO:0007669"/>
    <property type="project" value="TreeGrafter"/>
</dbReference>
<dbReference type="GO" id="GO:0019843">
    <property type="term" value="F:rRNA binding"/>
    <property type="evidence" value="ECO:0007669"/>
    <property type="project" value="UniProtKB-UniRule"/>
</dbReference>
<dbReference type="GO" id="GO:0003735">
    <property type="term" value="F:structural constituent of ribosome"/>
    <property type="evidence" value="ECO:0007669"/>
    <property type="project" value="InterPro"/>
</dbReference>
<dbReference type="GO" id="GO:0000049">
    <property type="term" value="F:tRNA binding"/>
    <property type="evidence" value="ECO:0007669"/>
    <property type="project" value="UniProtKB-KW"/>
</dbReference>
<dbReference type="GO" id="GO:0006412">
    <property type="term" value="P:translation"/>
    <property type="evidence" value="ECO:0007669"/>
    <property type="project" value="UniProtKB-UniRule"/>
</dbReference>
<dbReference type="CDD" id="cd01433">
    <property type="entry name" value="Ribosomal_L16_L10e"/>
    <property type="match status" value="1"/>
</dbReference>
<dbReference type="FunFam" id="3.90.1170.10:FF:000001">
    <property type="entry name" value="50S ribosomal protein L16"/>
    <property type="match status" value="1"/>
</dbReference>
<dbReference type="Gene3D" id="3.90.1170.10">
    <property type="entry name" value="Ribosomal protein L10e/L16"/>
    <property type="match status" value="1"/>
</dbReference>
<dbReference type="HAMAP" id="MF_01342">
    <property type="entry name" value="Ribosomal_uL16"/>
    <property type="match status" value="1"/>
</dbReference>
<dbReference type="InterPro" id="IPR047873">
    <property type="entry name" value="Ribosomal_uL16"/>
</dbReference>
<dbReference type="InterPro" id="IPR000114">
    <property type="entry name" value="Ribosomal_uL16_bact-type"/>
</dbReference>
<dbReference type="InterPro" id="IPR020798">
    <property type="entry name" value="Ribosomal_uL16_CS"/>
</dbReference>
<dbReference type="InterPro" id="IPR016180">
    <property type="entry name" value="Ribosomal_uL16_dom"/>
</dbReference>
<dbReference type="InterPro" id="IPR036920">
    <property type="entry name" value="Ribosomal_uL16_sf"/>
</dbReference>
<dbReference type="NCBIfam" id="TIGR01164">
    <property type="entry name" value="rplP_bact"/>
    <property type="match status" value="1"/>
</dbReference>
<dbReference type="PANTHER" id="PTHR12220">
    <property type="entry name" value="50S/60S RIBOSOMAL PROTEIN L16"/>
    <property type="match status" value="1"/>
</dbReference>
<dbReference type="PANTHER" id="PTHR12220:SF13">
    <property type="entry name" value="LARGE RIBOSOMAL SUBUNIT PROTEIN UL16M"/>
    <property type="match status" value="1"/>
</dbReference>
<dbReference type="Pfam" id="PF00252">
    <property type="entry name" value="Ribosomal_L16"/>
    <property type="match status" value="1"/>
</dbReference>
<dbReference type="PRINTS" id="PR00060">
    <property type="entry name" value="RIBOSOMALL16"/>
</dbReference>
<dbReference type="SUPFAM" id="SSF54686">
    <property type="entry name" value="Ribosomal protein L16p/L10e"/>
    <property type="match status" value="1"/>
</dbReference>
<dbReference type="PROSITE" id="PS00586">
    <property type="entry name" value="RIBOSOMAL_L16_1"/>
    <property type="match status" value="1"/>
</dbReference>
<dbReference type="PROSITE" id="PS00701">
    <property type="entry name" value="RIBOSOMAL_L16_2"/>
    <property type="match status" value="1"/>
</dbReference>
<feature type="chain" id="PRO_0000062044" description="Large ribosomal subunit protein uL16">
    <location>
        <begin position="1"/>
        <end position="144"/>
    </location>
</feature>
<comment type="function">
    <text evidence="1">Binds 23S rRNA and is also seen to make contacts with the A and possibly P site tRNAs.</text>
</comment>
<comment type="subunit">
    <text evidence="1">Part of the 50S ribosomal subunit.</text>
</comment>
<comment type="similarity">
    <text evidence="1">Belongs to the universal ribosomal protein uL16 family.</text>
</comment>
<protein>
    <recommendedName>
        <fullName evidence="1">Large ribosomal subunit protein uL16</fullName>
    </recommendedName>
    <alternativeName>
        <fullName evidence="2">50S ribosomal protein L16</fullName>
    </alternativeName>
</protein>
<sequence>MLMPKRVKYRREHRGKMRGRAKGGTEIAFGEFGLQAQAASWITNRQIEAARRAMTRYMKRGGKVWIKIFPSKPYTAKPLEVRMGSGKGAPEGWVAVVKPGKIMFEIAGVSEEVAREALRLAAHKLPVKCKFVKREENGGESNEN</sequence>
<accession>Q6HPQ1</accession>
<name>RL16_BACHK</name>
<gene>
    <name evidence="1" type="primary">rplP</name>
    <name type="ordered locus">BT9727_0113</name>
</gene>
<keyword id="KW-0687">Ribonucleoprotein</keyword>
<keyword id="KW-0689">Ribosomal protein</keyword>
<keyword id="KW-0694">RNA-binding</keyword>
<keyword id="KW-0699">rRNA-binding</keyword>
<keyword id="KW-0820">tRNA-binding</keyword>
<reference key="1">
    <citation type="journal article" date="2006" name="J. Bacteriol.">
        <title>Pathogenomic sequence analysis of Bacillus cereus and Bacillus thuringiensis isolates closely related to Bacillus anthracis.</title>
        <authorList>
            <person name="Han C.S."/>
            <person name="Xie G."/>
            <person name="Challacombe J.F."/>
            <person name="Altherr M.R."/>
            <person name="Bhotika S.S."/>
            <person name="Bruce D."/>
            <person name="Campbell C.S."/>
            <person name="Campbell M.L."/>
            <person name="Chen J."/>
            <person name="Chertkov O."/>
            <person name="Cleland C."/>
            <person name="Dimitrijevic M."/>
            <person name="Doggett N.A."/>
            <person name="Fawcett J.J."/>
            <person name="Glavina T."/>
            <person name="Goodwin L.A."/>
            <person name="Hill K.K."/>
            <person name="Hitchcock P."/>
            <person name="Jackson P.J."/>
            <person name="Keim P."/>
            <person name="Kewalramani A.R."/>
            <person name="Longmire J."/>
            <person name="Lucas S."/>
            <person name="Malfatti S."/>
            <person name="McMurry K."/>
            <person name="Meincke L.J."/>
            <person name="Misra M."/>
            <person name="Moseman B.L."/>
            <person name="Mundt M."/>
            <person name="Munk A.C."/>
            <person name="Okinaka R.T."/>
            <person name="Parson-Quintana B."/>
            <person name="Reilly L.P."/>
            <person name="Richardson P."/>
            <person name="Robinson D.L."/>
            <person name="Rubin E."/>
            <person name="Saunders E."/>
            <person name="Tapia R."/>
            <person name="Tesmer J.G."/>
            <person name="Thayer N."/>
            <person name="Thompson L.S."/>
            <person name="Tice H."/>
            <person name="Ticknor L.O."/>
            <person name="Wills P.L."/>
            <person name="Brettin T.S."/>
            <person name="Gilna P."/>
        </authorList>
    </citation>
    <scope>NUCLEOTIDE SEQUENCE [LARGE SCALE GENOMIC DNA]</scope>
    <source>
        <strain>97-27</strain>
    </source>
</reference>